<feature type="chain" id="PRO_0000066144" description="Uncharacterized 20.5 kDa protein in bchF-crtJ intergenic region">
    <location>
        <begin position="1"/>
        <end position="192"/>
    </location>
</feature>
<feature type="domain" description="B12-binding" evidence="1">
    <location>
        <begin position="72"/>
        <end position="192"/>
    </location>
</feature>
<reference key="1">
    <citation type="submission" date="1991-11" db="EMBL/GenBank/DDBJ databases">
        <authorList>
            <person name="Burke D.H."/>
            <person name="Alberti M."/>
            <person name="Armstrong G.A."/>
            <person name="Hearst J.E."/>
        </authorList>
    </citation>
    <scope>NUCLEOTIDE SEQUENCE [GENOMIC DNA]</scope>
</reference>
<dbReference type="EMBL" id="Z11165">
    <property type="protein sequence ID" value="CAA77528.1"/>
    <property type="molecule type" value="Genomic_DNA"/>
</dbReference>
<dbReference type="PIR" id="S17812">
    <property type="entry name" value="S17812"/>
</dbReference>
<dbReference type="SMR" id="P26166"/>
<dbReference type="GO" id="GO:0031419">
    <property type="term" value="F:cobalamin binding"/>
    <property type="evidence" value="ECO:0007669"/>
    <property type="project" value="InterPro"/>
</dbReference>
<dbReference type="GO" id="GO:0046872">
    <property type="term" value="F:metal ion binding"/>
    <property type="evidence" value="ECO:0007669"/>
    <property type="project" value="InterPro"/>
</dbReference>
<dbReference type="Gene3D" id="3.40.50.280">
    <property type="entry name" value="Cobalamin-binding domain"/>
    <property type="match status" value="1"/>
</dbReference>
<dbReference type="InterPro" id="IPR006158">
    <property type="entry name" value="Cobalamin-bd"/>
</dbReference>
<dbReference type="InterPro" id="IPR036724">
    <property type="entry name" value="Cobalamin-bd_sf"/>
</dbReference>
<dbReference type="Pfam" id="PF02310">
    <property type="entry name" value="B12-binding"/>
    <property type="match status" value="1"/>
</dbReference>
<dbReference type="SUPFAM" id="SSF52242">
    <property type="entry name" value="Cobalamin (vitamin B12)-binding domain"/>
    <property type="match status" value="1"/>
</dbReference>
<dbReference type="PROSITE" id="PS51332">
    <property type="entry name" value="B12_BINDING"/>
    <property type="match status" value="1"/>
</dbReference>
<sequence length="192" mass="20551">MDLLFDEFRAAHVPVEEMATHYIPEAARQIGAAWDSDRIGFAQVTIAISRLQELLHALQTLVTADSVGCANGATVLLIVPPGEQHTLGALIVAMELRRRGVSVRIVFAPGLSDLSRLMATTRFDAALITVGSMDRVEICAKLVKTLSSLTKGRMRVAIGGAIVSQRAEALARTGADLVTNDLSLVISEFSLV</sequence>
<organism>
    <name type="scientific">Rhodobacter capsulatus</name>
    <name type="common">Rhodopseudomonas capsulata</name>
    <dbReference type="NCBI Taxonomy" id="1061"/>
    <lineage>
        <taxon>Bacteria</taxon>
        <taxon>Pseudomonadati</taxon>
        <taxon>Pseudomonadota</taxon>
        <taxon>Alphaproteobacteria</taxon>
        <taxon>Rhodobacterales</taxon>
        <taxon>Rhodobacter group</taxon>
        <taxon>Rhodobacter</taxon>
    </lineage>
</organism>
<proteinExistence type="predicted"/>
<protein>
    <recommendedName>
        <fullName>Uncharacterized 20.5 kDa protein in bchF-crtJ intergenic region</fullName>
    </recommendedName>
    <alternativeName>
        <fullName>ORF192</fullName>
    </alternativeName>
</protein>
<evidence type="ECO:0000255" key="1">
    <source>
        <dbReference type="PROSITE-ProRule" id="PRU00666"/>
    </source>
</evidence>
<accession>P26166</accession>
<name>YBCC_RHOCA</name>